<name>TYDP2_XENTR</name>
<evidence type="ECO:0000250" key="1">
    <source>
        <dbReference type="UniProtKB" id="O95551"/>
    </source>
</evidence>
<evidence type="ECO:0000250" key="2">
    <source>
        <dbReference type="UniProtKB" id="Q9JJX7"/>
    </source>
</evidence>
<evidence type="ECO:0000305" key="3"/>
<proteinExistence type="evidence at transcript level"/>
<protein>
    <recommendedName>
        <fullName>Tyrosyl-DNA phosphodiesterase 2</fullName>
        <shortName>Tyr-DNA phosphodiesterase 2</shortName>
        <ecNumber evidence="2">3.1.4.-</ecNumber>
    </recommendedName>
    <alternativeName>
        <fullName>5'-tyrosyl-DNA phosphodiesterase</fullName>
        <shortName>5'-Tyr-DNA phosphodiesterase</shortName>
    </alternativeName>
    <alternativeName>
        <fullName>TRAF and TNF receptor-associated protein homolog</fullName>
    </alternativeName>
</protein>
<comment type="function">
    <text evidence="2">DNA repair enzyme that can remove a variety of covalent adducts from DNA through hydrolysis of a 5'-phosphodiester bond, giving rise to DNA with a free 5' phosphate. Catalyzes the hydrolysis of dead-end complexes between DNA and the topoisomerase 2 (top2) active site tyrosine residue. Hydrolyzes 5'-phosphoglycolates on protruding 5' ends on DNA double-strand breaks (DSBs) due to DNA damage by radiation and free radicals.</text>
</comment>
<comment type="cofactor">
    <cofactor evidence="2">
        <name>Mg(2+)</name>
        <dbReference type="ChEBI" id="CHEBI:18420"/>
    </cofactor>
    <cofactor evidence="2">
        <name>Mn(2+)</name>
        <dbReference type="ChEBI" id="CHEBI:29035"/>
    </cofactor>
    <text evidence="2">Binds 1 magnesium or manganese ion per subunit.</text>
</comment>
<comment type="subcellular location">
    <subcellularLocation>
        <location evidence="1">Nucleus</location>
    </subcellularLocation>
    <subcellularLocation>
        <location evidence="1">Nucleus</location>
        <location evidence="1">PML body</location>
    </subcellularLocation>
</comment>
<comment type="similarity">
    <text evidence="3">Belongs to the CCR4/nocturin family. TTRAP/TDP2 subfamily.</text>
</comment>
<comment type="sequence caution" evidence="3">
    <conflict type="erroneous initiation">
        <sequence resource="EMBL-CDS" id="AAI66146"/>
    </conflict>
</comment>
<comment type="sequence caution" evidence="3">
    <conflict type="erroneous initiation">
        <sequence resource="EMBL-CDS" id="CAJ81630"/>
    </conflict>
</comment>
<organism>
    <name type="scientific">Xenopus tropicalis</name>
    <name type="common">Western clawed frog</name>
    <name type="synonym">Silurana tropicalis</name>
    <dbReference type="NCBI Taxonomy" id="8364"/>
    <lineage>
        <taxon>Eukaryota</taxon>
        <taxon>Metazoa</taxon>
        <taxon>Chordata</taxon>
        <taxon>Craniata</taxon>
        <taxon>Vertebrata</taxon>
        <taxon>Euteleostomi</taxon>
        <taxon>Amphibia</taxon>
        <taxon>Batrachia</taxon>
        <taxon>Anura</taxon>
        <taxon>Pipoidea</taxon>
        <taxon>Pipidae</taxon>
        <taxon>Xenopodinae</taxon>
        <taxon>Xenopus</taxon>
        <taxon>Silurana</taxon>
    </lineage>
</organism>
<accession>Q28FQ5</accession>
<feature type="chain" id="PRO_0000390452" description="Tyrosyl-DNA phosphodiesterase 2">
    <location>
        <begin position="1"/>
        <end position="373"/>
    </location>
</feature>
<feature type="region of interest" description="Interaction with 5' end of substrate DNA" evidence="2">
    <location>
        <begin position="131"/>
        <end position="135"/>
    </location>
</feature>
<feature type="region of interest" description="Interaction with 5' end of substrate DNA" evidence="2">
    <location>
        <begin position="237"/>
        <end position="242"/>
    </location>
</feature>
<feature type="region of interest" description="Interaction with 5' end of substrate DNA" evidence="2">
    <location>
        <begin position="275"/>
        <end position="277"/>
    </location>
</feature>
<feature type="active site" description="Proton donor/acceptor" evidence="1">
    <location>
        <position position="273"/>
    </location>
</feature>
<feature type="binding site" evidence="2">
    <location>
        <position position="133"/>
    </location>
    <ligand>
        <name>Mg(2+)</name>
        <dbReference type="ChEBI" id="CHEBI:18420"/>
    </ligand>
</feature>
<feature type="binding site" evidence="2">
    <location>
        <position position="163"/>
    </location>
    <ligand>
        <name>Mg(2+)</name>
        <dbReference type="ChEBI" id="CHEBI:18420"/>
    </ligand>
</feature>
<feature type="site" description="Interaction with 5' end of substrate DNA" evidence="2">
    <location>
        <position position="189"/>
    </location>
</feature>
<feature type="site" description="Interaction with 5' end of substrate DNA" evidence="2">
    <location>
        <position position="308"/>
    </location>
</feature>
<feature type="site" description="Interaction with 5' end of substrate DNA" evidence="2">
    <location>
        <position position="326"/>
    </location>
</feature>
<feature type="site" description="Interaction with 5' end of substrate DNA" evidence="2">
    <location>
        <position position="362"/>
    </location>
</feature>
<keyword id="KW-0227">DNA damage</keyword>
<keyword id="KW-0234">DNA repair</keyword>
<keyword id="KW-0378">Hydrolase</keyword>
<keyword id="KW-0460">Magnesium</keyword>
<keyword id="KW-0479">Metal-binding</keyword>
<keyword id="KW-0540">Nuclease</keyword>
<keyword id="KW-0539">Nucleus</keyword>
<keyword id="KW-0675">Receptor</keyword>
<keyword id="KW-1185">Reference proteome</keyword>
<gene>
    <name type="primary">tdp2</name>
    <name type="synonym">ttrap</name>
    <name type="ORF">TGas102g02.1</name>
</gene>
<dbReference type="EC" id="3.1.4.-" evidence="2"/>
<dbReference type="EMBL" id="CR761829">
    <property type="protein sequence ID" value="CAJ81630.1"/>
    <property type="status" value="ALT_INIT"/>
    <property type="molecule type" value="mRNA"/>
</dbReference>
<dbReference type="EMBL" id="BC166146">
    <property type="protein sequence ID" value="AAI66146.1"/>
    <property type="status" value="ALT_INIT"/>
    <property type="molecule type" value="mRNA"/>
</dbReference>
<dbReference type="RefSeq" id="NP_001016944.1">
    <property type="nucleotide sequence ID" value="NM_001016944.2"/>
</dbReference>
<dbReference type="RefSeq" id="XP_012820215.1">
    <property type="nucleotide sequence ID" value="XM_012964761.1"/>
</dbReference>
<dbReference type="SMR" id="Q28FQ5"/>
<dbReference type="FunCoup" id="Q28FQ5">
    <property type="interactions" value="2627"/>
</dbReference>
<dbReference type="STRING" id="8364.ENSXETP00000025766"/>
<dbReference type="PaxDb" id="8364-ENSXETP00000032445"/>
<dbReference type="GeneID" id="549698"/>
<dbReference type="KEGG" id="xtr:549698"/>
<dbReference type="CTD" id="51567"/>
<dbReference type="eggNOG" id="KOG2756">
    <property type="taxonomic scope" value="Eukaryota"/>
</dbReference>
<dbReference type="HOGENOM" id="CLU_047318_0_0_1"/>
<dbReference type="InParanoid" id="Q28FQ5"/>
<dbReference type="OrthoDB" id="9975959at2759"/>
<dbReference type="Proteomes" id="UP000008143">
    <property type="component" value="Chromosome 6"/>
</dbReference>
<dbReference type="GO" id="GO:0016605">
    <property type="term" value="C:PML body"/>
    <property type="evidence" value="ECO:0000250"/>
    <property type="project" value="UniProtKB"/>
</dbReference>
<dbReference type="GO" id="GO:0070260">
    <property type="term" value="F:5'-tyrosyl-DNA phosphodiesterase activity"/>
    <property type="evidence" value="ECO:0000250"/>
    <property type="project" value="UniProtKB"/>
</dbReference>
<dbReference type="GO" id="GO:0000287">
    <property type="term" value="F:magnesium ion binding"/>
    <property type="evidence" value="ECO:0000250"/>
    <property type="project" value="UniProtKB"/>
</dbReference>
<dbReference type="GO" id="GO:0030145">
    <property type="term" value="F:manganese ion binding"/>
    <property type="evidence" value="ECO:0000250"/>
    <property type="project" value="UniProtKB"/>
</dbReference>
<dbReference type="GO" id="GO:0004518">
    <property type="term" value="F:nuclease activity"/>
    <property type="evidence" value="ECO:0007669"/>
    <property type="project" value="UniProtKB-KW"/>
</dbReference>
<dbReference type="GO" id="GO:0003697">
    <property type="term" value="F:single-stranded DNA binding"/>
    <property type="evidence" value="ECO:0000250"/>
    <property type="project" value="UniProtKB"/>
</dbReference>
<dbReference type="GO" id="GO:0006302">
    <property type="term" value="P:double-strand break repair"/>
    <property type="evidence" value="ECO:0000250"/>
    <property type="project" value="UniProtKB"/>
</dbReference>
<dbReference type="CDD" id="cd09080">
    <property type="entry name" value="TDP2"/>
    <property type="match status" value="1"/>
</dbReference>
<dbReference type="CDD" id="cd14344">
    <property type="entry name" value="UBA_TYDP2"/>
    <property type="match status" value="1"/>
</dbReference>
<dbReference type="FunFam" id="1.10.8.10:FF:000142">
    <property type="entry name" value="Tyrosyl-DNA phosphodiesterase 2"/>
    <property type="match status" value="1"/>
</dbReference>
<dbReference type="FunFam" id="3.60.10.10:FF:000024">
    <property type="entry name" value="Tyrosyl-DNA phosphodiesterase 2"/>
    <property type="match status" value="1"/>
</dbReference>
<dbReference type="Gene3D" id="1.10.8.10">
    <property type="entry name" value="DNA helicase RuvA subunit, C-terminal domain"/>
    <property type="match status" value="1"/>
</dbReference>
<dbReference type="Gene3D" id="3.60.10.10">
    <property type="entry name" value="Endonuclease/exonuclease/phosphatase"/>
    <property type="match status" value="1"/>
</dbReference>
<dbReference type="InterPro" id="IPR036691">
    <property type="entry name" value="Endo/exonu/phosph_ase_sf"/>
</dbReference>
<dbReference type="InterPro" id="IPR005135">
    <property type="entry name" value="Endo/exonuclease/phosphatase"/>
</dbReference>
<dbReference type="InterPro" id="IPR051547">
    <property type="entry name" value="TDP2-like"/>
</dbReference>
<dbReference type="InterPro" id="IPR009060">
    <property type="entry name" value="UBA-like_sf"/>
</dbReference>
<dbReference type="PANTHER" id="PTHR15822">
    <property type="entry name" value="TRAF AND TNF RECEPTOR-ASSOCIATED PROTEIN"/>
    <property type="match status" value="1"/>
</dbReference>
<dbReference type="PANTHER" id="PTHR15822:SF4">
    <property type="entry name" value="TYROSYL-DNA PHOSPHODIESTERASE 2"/>
    <property type="match status" value="1"/>
</dbReference>
<dbReference type="Pfam" id="PF03372">
    <property type="entry name" value="Exo_endo_phos"/>
    <property type="match status" value="1"/>
</dbReference>
<dbReference type="Pfam" id="PF14555">
    <property type="entry name" value="UBA_4"/>
    <property type="match status" value="1"/>
</dbReference>
<dbReference type="SUPFAM" id="SSF56219">
    <property type="entry name" value="DNase I-like"/>
    <property type="match status" value="1"/>
</dbReference>
<dbReference type="SUPFAM" id="SSF46934">
    <property type="entry name" value="UBA-like"/>
    <property type="match status" value="1"/>
</dbReference>
<sequence length="373" mass="41519">MEKEDAGAVQCGTGEGEAVVLNERSEQCSAFASIAGCDEAVAQCFLAENDWDMERAINSFFEPGVESALQNKAAADIADPLKQETMSGTASDSCIDLTGDDLVVTKSEATTSNSSTVKQEDESHFSFLTWNIDGLDESNVAERARGVCSYLALYSPDVVFLQEVIPPYYEYLKKRAVSYTIITGNEDEYFTAMMLKKSRVKLISQEIVPYPSTVMMRNLLVANVNISGNSICLMTSHLESTKDHSKERLKQLDIVLKKMMDAPPLATVIFGGDTNLRDQEVAKIGGMPNNILDVWDFLGKPEHCRYTWDTKVNKNLRAPYICRLRFDRIFFRASQEGSQVIPQSLYLAGTEKLDCGRFPSDHWGLLCDFAIIL</sequence>
<reference key="1">
    <citation type="submission" date="2006-10" db="EMBL/GenBank/DDBJ databases">
        <authorList>
            <consortium name="Sanger Xenopus tropicalis EST/cDNA project"/>
        </authorList>
    </citation>
    <scope>NUCLEOTIDE SEQUENCE [LARGE SCALE MRNA]</scope>
    <source>
        <tissue>Gastrula</tissue>
    </source>
</reference>
<reference key="2">
    <citation type="submission" date="2008-04" db="EMBL/GenBank/DDBJ databases">
        <authorList>
            <consortium name="NIH - Xenopus Gene Collection (XGC) project"/>
        </authorList>
    </citation>
    <scope>NUCLEOTIDE SEQUENCE [LARGE SCALE MRNA]</scope>
    <source>
        <tissue>Brain</tissue>
    </source>
</reference>